<feature type="chain" id="PRO_0000195750" description="Adenylate cyclase">
    <location>
        <begin position="1"/>
        <end position="399"/>
    </location>
</feature>
<feature type="domain" description="Guanylate cyclase" evidence="2">
    <location>
        <begin position="198"/>
        <end position="307"/>
    </location>
</feature>
<feature type="region of interest" description="Disordered" evidence="3">
    <location>
        <begin position="1"/>
        <end position="35"/>
    </location>
</feature>
<feature type="compositionally biased region" description="Polar residues" evidence="3">
    <location>
        <begin position="1"/>
        <end position="10"/>
    </location>
</feature>
<feature type="compositionally biased region" description="Basic and acidic residues" evidence="3">
    <location>
        <begin position="24"/>
        <end position="33"/>
    </location>
</feature>
<feature type="binding site" evidence="1">
    <location>
        <position position="203"/>
    </location>
    <ligand>
        <name>Mg(2+)</name>
        <dbReference type="ChEBI" id="CHEBI:18420"/>
    </ligand>
</feature>
<feature type="binding site" evidence="1">
    <location>
        <position position="247"/>
    </location>
    <ligand>
        <name>Mg(2+)</name>
        <dbReference type="ChEBI" id="CHEBI:18420"/>
    </ligand>
</feature>
<gene>
    <name type="primary">cya</name>
    <name type="synonym">cyaA</name>
</gene>
<organism>
    <name type="scientific">Streptomyces griseus</name>
    <dbReference type="NCBI Taxonomy" id="1911"/>
    <lineage>
        <taxon>Bacteria</taxon>
        <taxon>Bacillati</taxon>
        <taxon>Actinomycetota</taxon>
        <taxon>Actinomycetes</taxon>
        <taxon>Kitasatosporales</taxon>
        <taxon>Streptomycetaceae</taxon>
        <taxon>Streptomyces</taxon>
    </lineage>
</organism>
<comment type="catalytic activity">
    <reaction>
        <text>ATP = 3',5'-cyclic AMP + diphosphate</text>
        <dbReference type="Rhea" id="RHEA:15389"/>
        <dbReference type="ChEBI" id="CHEBI:30616"/>
        <dbReference type="ChEBI" id="CHEBI:33019"/>
        <dbReference type="ChEBI" id="CHEBI:58165"/>
        <dbReference type="EC" id="4.6.1.1"/>
    </reaction>
</comment>
<comment type="cofactor">
    <cofactor evidence="1">
        <name>Mg(2+)</name>
        <dbReference type="ChEBI" id="CHEBI:18420"/>
    </cofactor>
    <text evidence="1">Binds 1 Mg(2+) ion per subunit.</text>
</comment>
<comment type="similarity">
    <text evidence="4">Belongs to the adenylyl cyclase class-3 family.</text>
</comment>
<protein>
    <recommendedName>
        <fullName>Adenylate cyclase</fullName>
        <ecNumber>4.6.1.1</ecNumber>
    </recommendedName>
    <alternativeName>
        <fullName>ATP pyrophosphate-lyase</fullName>
    </alternativeName>
    <alternativeName>
        <fullName>Adenylyl cyclase</fullName>
    </alternativeName>
</protein>
<dbReference type="EC" id="4.6.1.1"/>
<dbReference type="EMBL" id="AB018557">
    <property type="protein sequence ID" value="BAA76599.1"/>
    <property type="molecule type" value="Genomic_DNA"/>
</dbReference>
<dbReference type="SMR" id="Q9WXC3"/>
<dbReference type="STRING" id="1911.GCA_001715295_02096"/>
<dbReference type="GO" id="GO:0004016">
    <property type="term" value="F:adenylate cyclase activity"/>
    <property type="evidence" value="ECO:0007669"/>
    <property type="project" value="UniProtKB-EC"/>
</dbReference>
<dbReference type="GO" id="GO:0005524">
    <property type="term" value="F:ATP binding"/>
    <property type="evidence" value="ECO:0007669"/>
    <property type="project" value="UniProtKB-KW"/>
</dbReference>
<dbReference type="GO" id="GO:0046872">
    <property type="term" value="F:metal ion binding"/>
    <property type="evidence" value="ECO:0007669"/>
    <property type="project" value="UniProtKB-KW"/>
</dbReference>
<dbReference type="GO" id="GO:0006171">
    <property type="term" value="P:cAMP biosynthetic process"/>
    <property type="evidence" value="ECO:0007669"/>
    <property type="project" value="UniProtKB-KW"/>
</dbReference>
<dbReference type="GO" id="GO:0035556">
    <property type="term" value="P:intracellular signal transduction"/>
    <property type="evidence" value="ECO:0007669"/>
    <property type="project" value="InterPro"/>
</dbReference>
<dbReference type="CDD" id="cd07302">
    <property type="entry name" value="CHD"/>
    <property type="match status" value="1"/>
</dbReference>
<dbReference type="Gene3D" id="3.30.70.1230">
    <property type="entry name" value="Nucleotide cyclase"/>
    <property type="match status" value="1"/>
</dbReference>
<dbReference type="InterPro" id="IPR001054">
    <property type="entry name" value="A/G_cyclase"/>
</dbReference>
<dbReference type="InterPro" id="IPR050697">
    <property type="entry name" value="Adenylyl/Guanylyl_Cyclase_3/4"/>
</dbReference>
<dbReference type="InterPro" id="IPR029787">
    <property type="entry name" value="Nucleotide_cyclase"/>
</dbReference>
<dbReference type="PANTHER" id="PTHR43081">
    <property type="entry name" value="ADENYLATE CYCLASE, TERMINAL-DIFFERENTIATION SPECIFIC-RELATED"/>
    <property type="match status" value="1"/>
</dbReference>
<dbReference type="PANTHER" id="PTHR43081:SF19">
    <property type="entry name" value="PH-SENSITIVE ADENYLATE CYCLASE RV1264"/>
    <property type="match status" value="1"/>
</dbReference>
<dbReference type="Pfam" id="PF00211">
    <property type="entry name" value="Guanylate_cyc"/>
    <property type="match status" value="1"/>
</dbReference>
<dbReference type="SMART" id="SM00044">
    <property type="entry name" value="CYCc"/>
    <property type="match status" value="1"/>
</dbReference>
<dbReference type="SUPFAM" id="SSF55073">
    <property type="entry name" value="Nucleotide cyclase"/>
    <property type="match status" value="1"/>
</dbReference>
<dbReference type="PROSITE" id="PS50125">
    <property type="entry name" value="GUANYLATE_CYCLASE_2"/>
    <property type="match status" value="1"/>
</dbReference>
<name>CYAA_STRGR</name>
<accession>Q9WXC3</accession>
<sequence length="399" mass="43164">MTVGDTTSGSGEEPAADSSVHATPHHEVDHTVEPTDDPLAIRLEALILGADRRYTPFQAARTAGVSMDLASRFWRAMAFADIGQAKALTEADVLALRRLAGLVEAGLLSEPMAIQVARSTGQTTARLAEWQIDSFLEGLTEPPEPGMTRTEVTYPLVELLLPELQEFLVYVWRRQLAAATGRVVQAADDEEMVDRRPRVRFADLVGFTRLTRRLEEEELGELVESFETTAADLVAPTAAGLVKTLGDEVLFAADDAGTAAEIALRLIEAMSQDETMPALRVGIAFGTVTTRMGDVFGTTVNLASRLTSIAPKDAVLVDGAFAKELVRHGEAPESEAQAAEAVAAAAERVRLAEKEGREPDDEPPLPTYRFGLQPMWQRPVRGLGVVEPWLLARRGKTGS</sequence>
<evidence type="ECO:0000250" key="1"/>
<evidence type="ECO:0000255" key="2">
    <source>
        <dbReference type="PROSITE-ProRule" id="PRU00099"/>
    </source>
</evidence>
<evidence type="ECO:0000256" key="3">
    <source>
        <dbReference type="SAM" id="MobiDB-lite"/>
    </source>
</evidence>
<evidence type="ECO:0000305" key="4"/>
<proteinExistence type="inferred from homology"/>
<keyword id="KW-0067">ATP-binding</keyword>
<keyword id="KW-0115">cAMP biosynthesis</keyword>
<keyword id="KW-0456">Lyase</keyword>
<keyword id="KW-0460">Magnesium</keyword>
<keyword id="KW-0479">Metal-binding</keyword>
<keyword id="KW-0547">Nucleotide-binding</keyword>
<reference key="1">
    <citation type="journal article" date="1999" name="Microbiology">
        <title>Possible involvement of cAMP in aerial mycelium formation and secondary metabolism in Streptomyces griseus.</title>
        <authorList>
            <person name="Kang D.K."/>
            <person name="Li X.M."/>
            <person name="Ochi K."/>
            <person name="Horinouchi S."/>
        </authorList>
    </citation>
    <scope>NUCLEOTIDE SEQUENCE [GENOMIC DNA]</scope>
</reference>